<gene>
    <name evidence="1" type="primary">rplO</name>
    <name type="ordered locus">Rcas_4007</name>
</gene>
<sequence length="174" mass="19117">MKLHDLKPALGAHRKRKRIGRGIGSGKGKTGGKGMMGQKARSGPNPSPSFEGGQMRITRKMPKLRGFKNRWRIEYQIINTGQLNNVPDGTELTINAMIEQGWVQPAKPVKILGDGELERKLTIHAHKFSASARARIEAAGGAAIETPWIVERRSRSRGPNPPRHHRKAEATPGA</sequence>
<organism>
    <name type="scientific">Roseiflexus castenholzii (strain DSM 13941 / HLO8)</name>
    <dbReference type="NCBI Taxonomy" id="383372"/>
    <lineage>
        <taxon>Bacteria</taxon>
        <taxon>Bacillati</taxon>
        <taxon>Chloroflexota</taxon>
        <taxon>Chloroflexia</taxon>
        <taxon>Chloroflexales</taxon>
        <taxon>Roseiflexineae</taxon>
        <taxon>Roseiflexaceae</taxon>
        <taxon>Roseiflexus</taxon>
    </lineage>
</organism>
<feature type="chain" id="PRO_1000086725" description="Large ribosomal subunit protein uL15">
    <location>
        <begin position="1"/>
        <end position="174"/>
    </location>
</feature>
<feature type="region of interest" description="Disordered" evidence="2">
    <location>
        <begin position="1"/>
        <end position="56"/>
    </location>
</feature>
<feature type="region of interest" description="Disordered" evidence="2">
    <location>
        <begin position="150"/>
        <end position="174"/>
    </location>
</feature>
<feature type="compositionally biased region" description="Gly residues" evidence="2">
    <location>
        <begin position="21"/>
        <end position="35"/>
    </location>
</feature>
<reference key="1">
    <citation type="submission" date="2007-08" db="EMBL/GenBank/DDBJ databases">
        <title>Complete sequence of Roseiflexus castenholzii DSM 13941.</title>
        <authorList>
            <consortium name="US DOE Joint Genome Institute"/>
            <person name="Copeland A."/>
            <person name="Lucas S."/>
            <person name="Lapidus A."/>
            <person name="Barry K."/>
            <person name="Glavina del Rio T."/>
            <person name="Dalin E."/>
            <person name="Tice H."/>
            <person name="Pitluck S."/>
            <person name="Thompson L.S."/>
            <person name="Brettin T."/>
            <person name="Bruce D."/>
            <person name="Detter J.C."/>
            <person name="Han C."/>
            <person name="Tapia R."/>
            <person name="Schmutz J."/>
            <person name="Larimer F."/>
            <person name="Land M."/>
            <person name="Hauser L."/>
            <person name="Kyrpides N."/>
            <person name="Mikhailova N."/>
            <person name="Bryant D.A."/>
            <person name="Hanada S."/>
            <person name="Tsukatani Y."/>
            <person name="Richardson P."/>
        </authorList>
    </citation>
    <scope>NUCLEOTIDE SEQUENCE [LARGE SCALE GENOMIC DNA]</scope>
    <source>
        <strain>DSM 13941 / HLO8</strain>
    </source>
</reference>
<name>RL15_ROSCS</name>
<dbReference type="EMBL" id="CP000804">
    <property type="protein sequence ID" value="ABU60040.1"/>
    <property type="molecule type" value="Genomic_DNA"/>
</dbReference>
<dbReference type="RefSeq" id="WP_012122462.1">
    <property type="nucleotide sequence ID" value="NC_009767.1"/>
</dbReference>
<dbReference type="SMR" id="A7NR44"/>
<dbReference type="STRING" id="383372.Rcas_4007"/>
<dbReference type="KEGG" id="rca:Rcas_4007"/>
<dbReference type="eggNOG" id="COG0200">
    <property type="taxonomic scope" value="Bacteria"/>
</dbReference>
<dbReference type="HOGENOM" id="CLU_055188_4_2_0"/>
<dbReference type="OrthoDB" id="9810293at2"/>
<dbReference type="Proteomes" id="UP000000263">
    <property type="component" value="Chromosome"/>
</dbReference>
<dbReference type="GO" id="GO:0022625">
    <property type="term" value="C:cytosolic large ribosomal subunit"/>
    <property type="evidence" value="ECO:0007669"/>
    <property type="project" value="TreeGrafter"/>
</dbReference>
<dbReference type="GO" id="GO:0019843">
    <property type="term" value="F:rRNA binding"/>
    <property type="evidence" value="ECO:0007669"/>
    <property type="project" value="UniProtKB-UniRule"/>
</dbReference>
<dbReference type="GO" id="GO:0003735">
    <property type="term" value="F:structural constituent of ribosome"/>
    <property type="evidence" value="ECO:0007669"/>
    <property type="project" value="InterPro"/>
</dbReference>
<dbReference type="GO" id="GO:0006412">
    <property type="term" value="P:translation"/>
    <property type="evidence" value="ECO:0007669"/>
    <property type="project" value="UniProtKB-UniRule"/>
</dbReference>
<dbReference type="Gene3D" id="3.100.10.10">
    <property type="match status" value="1"/>
</dbReference>
<dbReference type="HAMAP" id="MF_01341">
    <property type="entry name" value="Ribosomal_uL15"/>
    <property type="match status" value="1"/>
</dbReference>
<dbReference type="InterPro" id="IPR030878">
    <property type="entry name" value="Ribosomal_uL15"/>
</dbReference>
<dbReference type="InterPro" id="IPR021131">
    <property type="entry name" value="Ribosomal_uL15/eL18"/>
</dbReference>
<dbReference type="InterPro" id="IPR036227">
    <property type="entry name" value="Ribosomal_uL15/eL18_sf"/>
</dbReference>
<dbReference type="InterPro" id="IPR005749">
    <property type="entry name" value="Ribosomal_uL15_bac-type"/>
</dbReference>
<dbReference type="InterPro" id="IPR001196">
    <property type="entry name" value="Ribosomal_uL15_CS"/>
</dbReference>
<dbReference type="NCBIfam" id="TIGR01071">
    <property type="entry name" value="rplO_bact"/>
    <property type="match status" value="1"/>
</dbReference>
<dbReference type="PANTHER" id="PTHR12934">
    <property type="entry name" value="50S RIBOSOMAL PROTEIN L15"/>
    <property type="match status" value="1"/>
</dbReference>
<dbReference type="PANTHER" id="PTHR12934:SF11">
    <property type="entry name" value="LARGE RIBOSOMAL SUBUNIT PROTEIN UL15M"/>
    <property type="match status" value="1"/>
</dbReference>
<dbReference type="Pfam" id="PF00828">
    <property type="entry name" value="Ribosomal_L27A"/>
    <property type="match status" value="1"/>
</dbReference>
<dbReference type="SUPFAM" id="SSF52080">
    <property type="entry name" value="Ribosomal proteins L15p and L18e"/>
    <property type="match status" value="1"/>
</dbReference>
<dbReference type="PROSITE" id="PS00475">
    <property type="entry name" value="RIBOSOMAL_L15"/>
    <property type="match status" value="1"/>
</dbReference>
<keyword id="KW-1185">Reference proteome</keyword>
<keyword id="KW-0687">Ribonucleoprotein</keyword>
<keyword id="KW-0689">Ribosomal protein</keyword>
<keyword id="KW-0694">RNA-binding</keyword>
<keyword id="KW-0699">rRNA-binding</keyword>
<protein>
    <recommendedName>
        <fullName evidence="1">Large ribosomal subunit protein uL15</fullName>
    </recommendedName>
    <alternativeName>
        <fullName evidence="3">50S ribosomal protein L15</fullName>
    </alternativeName>
</protein>
<accession>A7NR44</accession>
<proteinExistence type="inferred from homology"/>
<comment type="function">
    <text evidence="1">Binds to the 23S rRNA.</text>
</comment>
<comment type="subunit">
    <text evidence="1">Part of the 50S ribosomal subunit.</text>
</comment>
<comment type="similarity">
    <text evidence="1">Belongs to the universal ribosomal protein uL15 family.</text>
</comment>
<evidence type="ECO:0000255" key="1">
    <source>
        <dbReference type="HAMAP-Rule" id="MF_01341"/>
    </source>
</evidence>
<evidence type="ECO:0000256" key="2">
    <source>
        <dbReference type="SAM" id="MobiDB-lite"/>
    </source>
</evidence>
<evidence type="ECO:0000305" key="3"/>